<gene>
    <name evidence="1" type="primary">ndhK</name>
</gene>
<name>NDHK_NUPAD</name>
<keyword id="KW-0004">4Fe-4S</keyword>
<keyword id="KW-0150">Chloroplast</keyword>
<keyword id="KW-0408">Iron</keyword>
<keyword id="KW-0411">Iron-sulfur</keyword>
<keyword id="KW-0472">Membrane</keyword>
<keyword id="KW-0479">Metal-binding</keyword>
<keyword id="KW-0520">NAD</keyword>
<keyword id="KW-0521">NADP</keyword>
<keyword id="KW-0934">Plastid</keyword>
<keyword id="KW-0618">Plastoquinone</keyword>
<keyword id="KW-0874">Quinone</keyword>
<keyword id="KW-0793">Thylakoid</keyword>
<keyword id="KW-1278">Translocase</keyword>
<keyword id="KW-0813">Transport</keyword>
<comment type="function">
    <text evidence="1">NDH shuttles electrons from NAD(P)H:plastoquinone, via FMN and iron-sulfur (Fe-S) centers, to quinones in the photosynthetic chain and possibly in a chloroplast respiratory chain. The immediate electron acceptor for the enzyme in this species is believed to be plastoquinone. Couples the redox reaction to proton translocation, and thus conserves the redox energy in a proton gradient.</text>
</comment>
<comment type="catalytic activity">
    <reaction evidence="1">
        <text>a plastoquinone + NADH + (n+1) H(+)(in) = a plastoquinol + NAD(+) + n H(+)(out)</text>
        <dbReference type="Rhea" id="RHEA:42608"/>
        <dbReference type="Rhea" id="RHEA-COMP:9561"/>
        <dbReference type="Rhea" id="RHEA-COMP:9562"/>
        <dbReference type="ChEBI" id="CHEBI:15378"/>
        <dbReference type="ChEBI" id="CHEBI:17757"/>
        <dbReference type="ChEBI" id="CHEBI:57540"/>
        <dbReference type="ChEBI" id="CHEBI:57945"/>
        <dbReference type="ChEBI" id="CHEBI:62192"/>
    </reaction>
</comment>
<comment type="catalytic activity">
    <reaction evidence="1">
        <text>a plastoquinone + NADPH + (n+1) H(+)(in) = a plastoquinol + NADP(+) + n H(+)(out)</text>
        <dbReference type="Rhea" id="RHEA:42612"/>
        <dbReference type="Rhea" id="RHEA-COMP:9561"/>
        <dbReference type="Rhea" id="RHEA-COMP:9562"/>
        <dbReference type="ChEBI" id="CHEBI:15378"/>
        <dbReference type="ChEBI" id="CHEBI:17757"/>
        <dbReference type="ChEBI" id="CHEBI:57783"/>
        <dbReference type="ChEBI" id="CHEBI:58349"/>
        <dbReference type="ChEBI" id="CHEBI:62192"/>
    </reaction>
</comment>
<comment type="cofactor">
    <cofactor evidence="1">
        <name>[4Fe-4S] cluster</name>
        <dbReference type="ChEBI" id="CHEBI:49883"/>
    </cofactor>
    <text evidence="1">Binds 1 [4Fe-4S] cluster.</text>
</comment>
<comment type="subunit">
    <text evidence="1">NDH is composed of at least 16 different subunits, 5 of which are encoded in the nucleus.</text>
</comment>
<comment type="subcellular location">
    <subcellularLocation>
        <location evidence="1">Plastid</location>
        <location evidence="1">Chloroplast thylakoid membrane</location>
        <topology evidence="1">Peripheral membrane protein</topology>
        <orientation evidence="1">Stromal side</orientation>
    </subcellularLocation>
</comment>
<comment type="similarity">
    <text evidence="1">Belongs to the complex I 20 kDa subunit family.</text>
</comment>
<comment type="sequence caution" evidence="2">
    <conflict type="erroneous initiation">
        <sequence resource="EMBL-CDS" id="ABC60462"/>
    </conflict>
</comment>
<reference key="1">
    <citation type="journal article" date="2007" name="BMC Genomics">
        <title>Comparative chloroplast genomics: analyses including new sequences from the angiosperms Nuphar advena and Ranunculus macranthus.</title>
        <authorList>
            <person name="Raubeson L.A."/>
            <person name="Peery R."/>
            <person name="Chumley T.W."/>
            <person name="Dziubek C."/>
            <person name="Fourcade H.M."/>
            <person name="Boore J.L."/>
            <person name="Jansen R.K."/>
        </authorList>
    </citation>
    <scope>NUCLEOTIDE SEQUENCE [LARGE SCALE GENOMIC DNA]</scope>
</reference>
<protein>
    <recommendedName>
        <fullName evidence="1">NAD(P)H-quinone oxidoreductase subunit K, chloroplastic</fullName>
        <ecNumber evidence="1">7.1.1.-</ecNumber>
    </recommendedName>
    <alternativeName>
        <fullName evidence="1">NAD(P)H dehydrogenase subunit K</fullName>
    </alternativeName>
    <alternativeName>
        <fullName evidence="1">NADH-plastoquinone oxidoreductase subunit K</fullName>
    </alternativeName>
</protein>
<evidence type="ECO:0000255" key="1">
    <source>
        <dbReference type="HAMAP-Rule" id="MF_01356"/>
    </source>
</evidence>
<evidence type="ECO:0000305" key="2"/>
<feature type="chain" id="PRO_0000358565" description="NAD(P)H-quinone oxidoreductase subunit K, chloroplastic">
    <location>
        <begin position="1"/>
        <end position="225"/>
    </location>
</feature>
<feature type="binding site" evidence="1">
    <location>
        <position position="43"/>
    </location>
    <ligand>
        <name>[4Fe-4S] cluster</name>
        <dbReference type="ChEBI" id="CHEBI:49883"/>
    </ligand>
</feature>
<feature type="binding site" evidence="1">
    <location>
        <position position="44"/>
    </location>
    <ligand>
        <name>[4Fe-4S] cluster</name>
        <dbReference type="ChEBI" id="CHEBI:49883"/>
    </ligand>
</feature>
<feature type="binding site" evidence="1">
    <location>
        <position position="108"/>
    </location>
    <ligand>
        <name>[4Fe-4S] cluster</name>
        <dbReference type="ChEBI" id="CHEBI:49883"/>
    </ligand>
</feature>
<feature type="binding site" evidence="1">
    <location>
        <position position="139"/>
    </location>
    <ligand>
        <name>[4Fe-4S] cluster</name>
        <dbReference type="ChEBI" id="CHEBI:49883"/>
    </ligand>
</feature>
<sequence length="225" mass="25332">MNSMEFPFLDRTTPNSVISTTLNDLSNWSRLSSLWPLLYGTSCCFIEFASLIGSRFDFDRYGLVPRSSPRQADLILTAGTVTMKMAPSLVRLYEQMPEPKYVIAMGACTITGGMFSTDSYSTVRGVDKLIPVDVYLPGCPPKPEAIIDAITKLRKKVSREIYEDRTESQQENRCFTTNHKFHLGRSTRAVNYDQGLLYQSTSTSEIPSEAFFKYKSSVSSHELVN</sequence>
<geneLocation type="chloroplast"/>
<accession>A1XFV9</accession>
<proteinExistence type="inferred from homology"/>
<organism>
    <name type="scientific">Nuphar advena</name>
    <name type="common">Common spatterdock</name>
    <name type="synonym">Nuphar lutea subsp. advena</name>
    <dbReference type="NCBI Taxonomy" id="77108"/>
    <lineage>
        <taxon>Eukaryota</taxon>
        <taxon>Viridiplantae</taxon>
        <taxon>Streptophyta</taxon>
        <taxon>Embryophyta</taxon>
        <taxon>Tracheophyta</taxon>
        <taxon>Spermatophyta</taxon>
        <taxon>Magnoliopsida</taxon>
        <taxon>Nymphaeales</taxon>
        <taxon>Nymphaeaceae</taxon>
        <taxon>Nuphar</taxon>
    </lineage>
</organism>
<dbReference type="EC" id="7.1.1.-" evidence="1"/>
<dbReference type="EMBL" id="DQ354691">
    <property type="protein sequence ID" value="ABC60462.1"/>
    <property type="status" value="ALT_INIT"/>
    <property type="molecule type" value="Genomic_DNA"/>
</dbReference>
<dbReference type="RefSeq" id="YP_001001538.2">
    <property type="nucleotide sequence ID" value="NC_008788.1"/>
</dbReference>
<dbReference type="SMR" id="A1XFV9"/>
<dbReference type="GeneID" id="4699571"/>
<dbReference type="GO" id="GO:0009535">
    <property type="term" value="C:chloroplast thylakoid membrane"/>
    <property type="evidence" value="ECO:0007669"/>
    <property type="project" value="UniProtKB-SubCell"/>
</dbReference>
<dbReference type="GO" id="GO:0045271">
    <property type="term" value="C:respiratory chain complex I"/>
    <property type="evidence" value="ECO:0007669"/>
    <property type="project" value="TreeGrafter"/>
</dbReference>
<dbReference type="GO" id="GO:0051539">
    <property type="term" value="F:4 iron, 4 sulfur cluster binding"/>
    <property type="evidence" value="ECO:0007669"/>
    <property type="project" value="UniProtKB-KW"/>
</dbReference>
<dbReference type="GO" id="GO:0005506">
    <property type="term" value="F:iron ion binding"/>
    <property type="evidence" value="ECO:0007669"/>
    <property type="project" value="UniProtKB-UniRule"/>
</dbReference>
<dbReference type="GO" id="GO:0008137">
    <property type="term" value="F:NADH dehydrogenase (ubiquinone) activity"/>
    <property type="evidence" value="ECO:0007669"/>
    <property type="project" value="InterPro"/>
</dbReference>
<dbReference type="GO" id="GO:0048038">
    <property type="term" value="F:quinone binding"/>
    <property type="evidence" value="ECO:0007669"/>
    <property type="project" value="UniProtKB-KW"/>
</dbReference>
<dbReference type="GO" id="GO:0009060">
    <property type="term" value="P:aerobic respiration"/>
    <property type="evidence" value="ECO:0007669"/>
    <property type="project" value="TreeGrafter"/>
</dbReference>
<dbReference type="GO" id="GO:0015990">
    <property type="term" value="P:electron transport coupled proton transport"/>
    <property type="evidence" value="ECO:0007669"/>
    <property type="project" value="TreeGrafter"/>
</dbReference>
<dbReference type="GO" id="GO:0019684">
    <property type="term" value="P:photosynthesis, light reaction"/>
    <property type="evidence" value="ECO:0007669"/>
    <property type="project" value="UniProtKB-UniRule"/>
</dbReference>
<dbReference type="FunFam" id="3.40.50.12280:FF:000003">
    <property type="entry name" value="NAD(P)H-quinone oxidoreductase subunit K, chloroplastic"/>
    <property type="match status" value="1"/>
</dbReference>
<dbReference type="Gene3D" id="3.40.50.12280">
    <property type="match status" value="1"/>
</dbReference>
<dbReference type="HAMAP" id="MF_01356">
    <property type="entry name" value="NDH1_NuoB"/>
    <property type="match status" value="1"/>
</dbReference>
<dbReference type="InterPro" id="IPR006137">
    <property type="entry name" value="NADH_UbQ_OxRdtase-like_20kDa"/>
</dbReference>
<dbReference type="InterPro" id="IPR006138">
    <property type="entry name" value="NADH_UQ_OxRdtase_20Kd_su"/>
</dbReference>
<dbReference type="NCBIfam" id="TIGR01957">
    <property type="entry name" value="nuoB_fam"/>
    <property type="match status" value="1"/>
</dbReference>
<dbReference type="NCBIfam" id="NF005012">
    <property type="entry name" value="PRK06411.1"/>
    <property type="match status" value="1"/>
</dbReference>
<dbReference type="PANTHER" id="PTHR11995">
    <property type="entry name" value="NADH DEHYDROGENASE"/>
    <property type="match status" value="1"/>
</dbReference>
<dbReference type="PANTHER" id="PTHR11995:SF14">
    <property type="entry name" value="NADH DEHYDROGENASE [UBIQUINONE] IRON-SULFUR PROTEIN 7, MITOCHONDRIAL"/>
    <property type="match status" value="1"/>
</dbReference>
<dbReference type="Pfam" id="PF01058">
    <property type="entry name" value="Oxidored_q6"/>
    <property type="match status" value="1"/>
</dbReference>
<dbReference type="SUPFAM" id="SSF56770">
    <property type="entry name" value="HydA/Nqo6-like"/>
    <property type="match status" value="1"/>
</dbReference>
<dbReference type="PROSITE" id="PS01150">
    <property type="entry name" value="COMPLEX1_20K"/>
    <property type="match status" value="1"/>
</dbReference>